<organism>
    <name type="scientific">Mycobacterium tuberculosis (strain ATCC 25618 / H37Rv)</name>
    <dbReference type="NCBI Taxonomy" id="83332"/>
    <lineage>
        <taxon>Bacteria</taxon>
        <taxon>Bacillati</taxon>
        <taxon>Actinomycetota</taxon>
        <taxon>Actinomycetes</taxon>
        <taxon>Mycobacteriales</taxon>
        <taxon>Mycobacteriaceae</taxon>
        <taxon>Mycobacterium</taxon>
        <taxon>Mycobacterium tuberculosis complex</taxon>
    </lineage>
</organism>
<feature type="chain" id="PRO_0000062725" description="Probable peptidoglycan glycosyltransferase FtsW">
    <location>
        <begin position="1"/>
        <end position="524"/>
    </location>
</feature>
<feature type="topological domain" description="Cytoplasmic" evidence="4">
    <location>
        <begin position="1"/>
        <end position="55"/>
    </location>
</feature>
<feature type="transmembrane region" description="Helical" evidence="4">
    <location>
        <begin position="56"/>
        <end position="76"/>
    </location>
</feature>
<feature type="topological domain" description="Extracellular" evidence="4">
    <location>
        <begin position="77"/>
        <end position="89"/>
    </location>
</feature>
<feature type="transmembrane region" description="Helical" evidence="4">
    <location>
        <begin position="90"/>
        <end position="110"/>
    </location>
</feature>
<feature type="topological domain" description="Cytoplasmic" evidence="4">
    <location>
        <begin position="111"/>
        <end position="121"/>
    </location>
</feature>
<feature type="transmembrane region" description="Helical" evidence="4">
    <location>
        <begin position="122"/>
        <end position="142"/>
    </location>
</feature>
<feature type="topological domain" description="Extracellular" evidence="4">
    <location>
        <begin position="143"/>
        <end position="151"/>
    </location>
</feature>
<feature type="transmembrane region" description="Helical" evidence="4">
    <location>
        <begin position="152"/>
        <end position="172"/>
    </location>
</feature>
<feature type="topological domain" description="Cytoplasmic" evidence="4">
    <location>
        <begin position="173"/>
        <end position="191"/>
    </location>
</feature>
<feature type="transmembrane region" description="Helical" evidence="4">
    <location>
        <begin position="192"/>
        <end position="212"/>
    </location>
</feature>
<feature type="transmembrane region" description="Helical" evidence="4">
    <location>
        <begin position="213"/>
        <end position="233"/>
    </location>
</feature>
<feature type="topological domain" description="Cytoplasmic" evidence="4">
    <location>
        <position position="234"/>
    </location>
</feature>
<feature type="transmembrane region" description="Helical" evidence="4">
    <location>
        <begin position="235"/>
        <end position="255"/>
    </location>
</feature>
<feature type="topological domain" description="Extracellular" evidence="4">
    <location>
        <begin position="256"/>
        <end position="311"/>
    </location>
</feature>
<feature type="transmembrane region" description="Helical" evidence="4">
    <location>
        <begin position="312"/>
        <end position="332"/>
    </location>
</feature>
<feature type="topological domain" description="Cytoplasmic" evidence="4">
    <location>
        <begin position="333"/>
        <end position="350"/>
    </location>
</feature>
<feature type="transmembrane region" description="Helical" evidence="4">
    <location>
        <begin position="351"/>
        <end position="373"/>
    </location>
</feature>
<feature type="topological domain" description="Extracellular" evidence="4">
    <location>
        <begin position="374"/>
        <end position="388"/>
    </location>
</feature>
<feature type="transmembrane region" description="Helical" evidence="4">
    <location>
        <begin position="389"/>
        <end position="409"/>
    </location>
</feature>
<feature type="topological domain" description="Cytoplasmic" evidence="4">
    <location>
        <begin position="410"/>
        <end position="524"/>
    </location>
</feature>
<feature type="region of interest" description="Disordered" evidence="5">
    <location>
        <begin position="1"/>
        <end position="42"/>
    </location>
</feature>
<feature type="region of interest" description="Disordered" evidence="5">
    <location>
        <begin position="448"/>
        <end position="524"/>
    </location>
</feature>
<keyword id="KW-0131">Cell cycle</keyword>
<keyword id="KW-0132">Cell division</keyword>
<keyword id="KW-1003">Cell membrane</keyword>
<keyword id="KW-0133">Cell shape</keyword>
<keyword id="KW-0961">Cell wall biogenesis/degradation</keyword>
<keyword id="KW-0328">Glycosyltransferase</keyword>
<keyword id="KW-0472">Membrane</keyword>
<keyword id="KW-0573">Peptidoglycan synthesis</keyword>
<keyword id="KW-1185">Reference proteome</keyword>
<keyword id="KW-0808">Transferase</keyword>
<keyword id="KW-0812">Transmembrane</keyword>
<keyword id="KW-1133">Transmembrane helix</keyword>
<proteinExistence type="evidence at protein level"/>
<gene>
    <name type="primary">ftsW</name>
    <name type="ordered locus">Rv2154c</name>
    <name type="ORF">MTCY270.14</name>
</gene>
<protein>
    <recommendedName>
        <fullName evidence="3">Probable peptidoglycan glycosyltransferase FtsW</fullName>
        <shortName evidence="3">PGT</shortName>
        <ecNumber evidence="3">2.4.99.28</ecNumber>
    </recommendedName>
    <alternativeName>
        <fullName evidence="2">Cell division protein FtsW</fullName>
    </alternativeName>
    <alternativeName>
        <fullName evidence="3">Cell wall polymerase</fullName>
    </alternativeName>
    <alternativeName>
        <fullName evidence="3">Peptidoglycan polymerase</fullName>
        <shortName evidence="3">PG polymerase</shortName>
    </alternativeName>
</protein>
<evidence type="ECO:0000250" key="1"/>
<evidence type="ECO:0000250" key="2">
    <source>
        <dbReference type="UniProtKB" id="O07639"/>
    </source>
</evidence>
<evidence type="ECO:0000250" key="3">
    <source>
        <dbReference type="UniProtKB" id="P39604"/>
    </source>
</evidence>
<evidence type="ECO:0000255" key="4"/>
<evidence type="ECO:0000256" key="5">
    <source>
        <dbReference type="SAM" id="MobiDB-lite"/>
    </source>
</evidence>
<evidence type="ECO:0000269" key="6">
    <source>
    </source>
</evidence>
<evidence type="ECO:0000269" key="7">
    <source>
    </source>
</evidence>
<evidence type="ECO:0000305" key="8"/>
<sequence length="524" mass="56337">MLTRLLRRGTSDTDGSQTRGAEPVEGQRTGPEEASNPGSARPRTRFGAWLGRPMTSFHLIIAVAALLTTLGLIMVLSASAVRSYDDDGSAWVIFGKQVLWTLVGLIGGYVCLRMSVRFMRRIAFSGFAITIVMLVLVLVPGIGKEANGSRGWFVVAGFSMQPSELAKMAFAIWGAHLLAARRMERASLREMLIPLVPAAVVALALIVAQPDLGQTVSMGIILLGLLWYAGLPLRVFLSSLAAVVVSAAILAVSAGYRSDRVRSWLNPENDPQDSGYQARQAKFALAQGGIFGDGLGQGVAKWNYLPNAHNDFIFAIIGEELGLVGALGLLGLFGLFAYTGMRIASRSADPFLRLLTATTTLWVLGQAFINIGYVIGLLPVTGLQLPLISAGGTSTAATLSLIGIIANAARHEPEAVAALRAGRDDKVNRLLRLPLPEPYLPPRLEAFRDRKRANPQPAQTQPARKTPRTAPGQPARQMGLPPRPGSPRTADPPVRRSVHHGAGQRYAGQRRTRRVRALEGQRYG</sequence>
<comment type="function">
    <text evidence="3">Peptidoglycan polymerase that is essential for cell division.</text>
</comment>
<comment type="catalytic activity">
    <reaction evidence="3">
        <text>[GlcNAc-(1-&gt;4)-Mur2Ac(oyl-L-Ala-gamma-D-Glu-L-Lys-D-Ala-D-Ala)](n)-di-trans,octa-cis-undecaprenyl diphosphate + beta-D-GlcNAc-(1-&gt;4)-Mur2Ac(oyl-L-Ala-gamma-D-Glu-L-Lys-D-Ala-D-Ala)-di-trans,octa-cis-undecaprenyl diphosphate = [GlcNAc-(1-&gt;4)-Mur2Ac(oyl-L-Ala-gamma-D-Glu-L-Lys-D-Ala-D-Ala)](n+1)-di-trans,octa-cis-undecaprenyl diphosphate + di-trans,octa-cis-undecaprenyl diphosphate + H(+)</text>
        <dbReference type="Rhea" id="RHEA:23708"/>
        <dbReference type="Rhea" id="RHEA-COMP:9602"/>
        <dbReference type="Rhea" id="RHEA-COMP:9603"/>
        <dbReference type="ChEBI" id="CHEBI:15378"/>
        <dbReference type="ChEBI" id="CHEBI:58405"/>
        <dbReference type="ChEBI" id="CHEBI:60033"/>
        <dbReference type="ChEBI" id="CHEBI:78435"/>
        <dbReference type="EC" id="2.4.99.28"/>
    </reaction>
</comment>
<comment type="pathway">
    <text evidence="3">Cell wall biogenesis; peptidoglycan biosynthesis.</text>
</comment>
<comment type="subunit">
    <text evidence="7">Forms a complex with FtsZ and PbpB (PBP3, FtsI).</text>
</comment>
<comment type="subcellular location">
    <subcellularLocation>
        <location evidence="7">Cell membrane</location>
        <topology evidence="7">Multi-pass membrane protein</topology>
    </subcellularLocation>
    <text evidence="1">Localizes to the division septum.</text>
</comment>
<comment type="domain">
    <text evidence="6 7">Interacts with FtsZ via its C-terminal region, and with PbpB via two extracytoplasmic loops.</text>
</comment>
<comment type="similarity">
    <text evidence="8">Belongs to the SEDS family. FtsW subfamily.</text>
</comment>
<dbReference type="EC" id="2.4.99.28" evidence="3"/>
<dbReference type="EMBL" id="AL123456">
    <property type="protein sequence ID" value="CCP44930.1"/>
    <property type="molecule type" value="Genomic_DNA"/>
</dbReference>
<dbReference type="PIR" id="F70579">
    <property type="entry name" value="F70579"/>
</dbReference>
<dbReference type="RefSeq" id="NP_216670.1">
    <property type="nucleotide sequence ID" value="NC_000962.3"/>
</dbReference>
<dbReference type="RefSeq" id="WP_003411165.1">
    <property type="nucleotide sequence ID" value="NZ_NVQJ01000044.1"/>
</dbReference>
<dbReference type="SMR" id="P9WN97"/>
<dbReference type="FunCoup" id="P9WN97">
    <property type="interactions" value="50"/>
</dbReference>
<dbReference type="STRING" id="83332.Rv2154c"/>
<dbReference type="PaxDb" id="83332-Rv2154c"/>
<dbReference type="DNASU" id="887916"/>
<dbReference type="GeneID" id="887916"/>
<dbReference type="KEGG" id="mtu:Rv2154c"/>
<dbReference type="KEGG" id="mtv:RVBD_2154c"/>
<dbReference type="TubercuList" id="Rv2154c"/>
<dbReference type="eggNOG" id="COG0772">
    <property type="taxonomic scope" value="Bacteria"/>
</dbReference>
<dbReference type="InParanoid" id="P9WN97"/>
<dbReference type="OrthoDB" id="9768187at2"/>
<dbReference type="PhylomeDB" id="P9WN97"/>
<dbReference type="UniPathway" id="UPA00219"/>
<dbReference type="Proteomes" id="UP000001584">
    <property type="component" value="Chromosome"/>
</dbReference>
<dbReference type="GO" id="GO:0032153">
    <property type="term" value="C:cell division site"/>
    <property type="evidence" value="ECO:0000318"/>
    <property type="project" value="GO_Central"/>
</dbReference>
<dbReference type="GO" id="GO:0005886">
    <property type="term" value="C:plasma membrane"/>
    <property type="evidence" value="ECO:0000318"/>
    <property type="project" value="GO_Central"/>
</dbReference>
<dbReference type="GO" id="GO:0015648">
    <property type="term" value="F:lipid-linked peptidoglycan transporter activity"/>
    <property type="evidence" value="ECO:0000318"/>
    <property type="project" value="GO_Central"/>
</dbReference>
<dbReference type="GO" id="GO:0008955">
    <property type="term" value="F:peptidoglycan glycosyltransferase activity"/>
    <property type="evidence" value="ECO:0007669"/>
    <property type="project" value="RHEA"/>
</dbReference>
<dbReference type="GO" id="GO:0051301">
    <property type="term" value="P:cell division"/>
    <property type="evidence" value="ECO:0000318"/>
    <property type="project" value="GO_Central"/>
</dbReference>
<dbReference type="GO" id="GO:0071555">
    <property type="term" value="P:cell wall organization"/>
    <property type="evidence" value="ECO:0007669"/>
    <property type="project" value="UniProtKB-KW"/>
</dbReference>
<dbReference type="GO" id="GO:0009252">
    <property type="term" value="P:peptidoglycan biosynthetic process"/>
    <property type="evidence" value="ECO:0007669"/>
    <property type="project" value="UniProtKB-UniPathway"/>
</dbReference>
<dbReference type="GO" id="GO:0008360">
    <property type="term" value="P:regulation of cell shape"/>
    <property type="evidence" value="ECO:0000318"/>
    <property type="project" value="GO_Central"/>
</dbReference>
<dbReference type="InterPro" id="IPR018365">
    <property type="entry name" value="Cell_cycle_FtsW-rel_CS"/>
</dbReference>
<dbReference type="InterPro" id="IPR013437">
    <property type="entry name" value="FtsW"/>
</dbReference>
<dbReference type="InterPro" id="IPR001182">
    <property type="entry name" value="FtsW/RodA"/>
</dbReference>
<dbReference type="NCBIfam" id="TIGR02614">
    <property type="entry name" value="ftsW"/>
    <property type="match status" value="1"/>
</dbReference>
<dbReference type="PANTHER" id="PTHR30474">
    <property type="entry name" value="CELL CYCLE PROTEIN"/>
    <property type="match status" value="1"/>
</dbReference>
<dbReference type="PANTHER" id="PTHR30474:SF2">
    <property type="entry name" value="PEPTIDOGLYCAN GLYCOSYLTRANSFERASE FTSW-RELATED"/>
    <property type="match status" value="1"/>
</dbReference>
<dbReference type="Pfam" id="PF01098">
    <property type="entry name" value="FTSW_RODA_SPOVE"/>
    <property type="match status" value="1"/>
</dbReference>
<dbReference type="PROSITE" id="PS00428">
    <property type="entry name" value="FTSW_RODA_SPOVE"/>
    <property type="match status" value="1"/>
</dbReference>
<reference key="1">
    <citation type="journal article" date="1998" name="Nature">
        <title>Deciphering the biology of Mycobacterium tuberculosis from the complete genome sequence.</title>
        <authorList>
            <person name="Cole S.T."/>
            <person name="Brosch R."/>
            <person name="Parkhill J."/>
            <person name="Garnier T."/>
            <person name="Churcher C.M."/>
            <person name="Harris D.E."/>
            <person name="Gordon S.V."/>
            <person name="Eiglmeier K."/>
            <person name="Gas S."/>
            <person name="Barry C.E. III"/>
            <person name="Tekaia F."/>
            <person name="Badcock K."/>
            <person name="Basham D."/>
            <person name="Brown D."/>
            <person name="Chillingworth T."/>
            <person name="Connor R."/>
            <person name="Davies R.M."/>
            <person name="Devlin K."/>
            <person name="Feltwell T."/>
            <person name="Gentles S."/>
            <person name="Hamlin N."/>
            <person name="Holroyd S."/>
            <person name="Hornsby T."/>
            <person name="Jagels K."/>
            <person name="Krogh A."/>
            <person name="McLean J."/>
            <person name="Moule S."/>
            <person name="Murphy L.D."/>
            <person name="Oliver S."/>
            <person name="Osborne J."/>
            <person name="Quail M.A."/>
            <person name="Rajandream M.A."/>
            <person name="Rogers J."/>
            <person name="Rutter S."/>
            <person name="Seeger K."/>
            <person name="Skelton S."/>
            <person name="Squares S."/>
            <person name="Squares R."/>
            <person name="Sulston J.E."/>
            <person name="Taylor K."/>
            <person name="Whitehead S."/>
            <person name="Barrell B.G."/>
        </authorList>
    </citation>
    <scope>NUCLEOTIDE SEQUENCE [LARGE SCALE GENOMIC DNA]</scope>
    <source>
        <strain>ATCC 25618 / H37Rv</strain>
    </source>
</reference>
<reference key="2">
    <citation type="journal article" date="2002" name="J. Biol. Chem.">
        <title>Interaction between FtsZ and FtsW of Mycobacterium tuberculosis.</title>
        <authorList>
            <person name="Datta P."/>
            <person name="Dasgupta A."/>
            <person name="Bhakta S."/>
            <person name="Basu J."/>
        </authorList>
    </citation>
    <scope>INTERACTION WITH FTSZ</scope>
    <scope>DOMAIN</scope>
    <source>
        <strain>ATCC 25618 / H37Rv</strain>
    </source>
</reference>
<reference key="3">
    <citation type="journal article" date="2006" name="Mol. Microbiol.">
        <title>Interaction between FtsW and penicillin-binding protein 3 (PBP3) directs PBP3 to mid-cell, controls cell septation and mediates the formation of a trimeric complex involving FtsZ, FtsW and PBP3 in mycobacteria.</title>
        <authorList>
            <person name="Datta P."/>
            <person name="Dasgupta A."/>
            <person name="Singh A.K."/>
            <person name="Mukherjee P."/>
            <person name="Kundu M."/>
            <person name="Basu J."/>
        </authorList>
    </citation>
    <scope>SUBUNIT</scope>
    <scope>INTERACTION WITH PBPB</scope>
    <scope>SUBCELLULAR LOCATION</scope>
    <scope>TOPOLOGY</scope>
    <scope>DOMAIN</scope>
</reference>
<accession>P9WN97</accession>
<accession>L0T901</accession>
<accession>O06223</accession>
<accession>P63762</accession>
<name>FTSW_MYCTU</name>